<protein>
    <recommendedName>
        <fullName>Probable cysteine desulfurase</fullName>
        <ecNumber>2.8.1.7</ecNumber>
    </recommendedName>
</protein>
<sequence length="401" mass="43274">MSLPSPWRADFPAFSAFAAEGLTYLDSAATAQKPQAVLDALNGYYLGGAANVHRAQHVPGERATRAFEAARSRVAHWLHAGNPAEVLFTRGTTEAINLVAYGLERHFRPGDELLVSALEHHANLLPWQQLALRRGLVLRVLPLDERGVIDLEQARHIIGERTRLLAISQLSNVLGTWQPVVELIQLARERGAWTLVDGAQGSVHGRHDLPGLGCDFYAFSGHKLYGPDGIGVLWGRPQALEQLAHWQFGGEMVRHTGFHEASFHAAPLGFEAGTPAVSAAIGLGATIDWLATLDEAEVAAHEGALHARLLAGLLARDGVSLLGEPQAALASFCVDGVHVADLAHLLGEQGIAVRAGHHCAMPLLQRLEVPGALRVSLGLYNDADDLERFFLALDRSLELLR</sequence>
<feature type="chain" id="PRO_0000150307" description="Probable cysteine desulfurase">
    <location>
        <begin position="1"/>
        <end position="401"/>
    </location>
</feature>
<feature type="modified residue" description="N6-(pyridoxal phosphate)lysine" evidence="1">
    <location>
        <position position="223"/>
    </location>
</feature>
<evidence type="ECO:0000250" key="1"/>
<evidence type="ECO:0000305" key="2"/>
<organism>
    <name type="scientific">Pseudomonas aeruginosa (strain ATCC 15692 / DSM 22644 / CIP 104116 / JCM 14847 / LMG 12228 / 1C / PRS 101 / PAO1)</name>
    <dbReference type="NCBI Taxonomy" id="208964"/>
    <lineage>
        <taxon>Bacteria</taxon>
        <taxon>Pseudomonadati</taxon>
        <taxon>Pseudomonadota</taxon>
        <taxon>Gammaproteobacteria</taxon>
        <taxon>Pseudomonadales</taxon>
        <taxon>Pseudomonadaceae</taxon>
        <taxon>Pseudomonas</taxon>
    </lineage>
</organism>
<keyword id="KW-0663">Pyridoxal phosphate</keyword>
<keyword id="KW-1185">Reference proteome</keyword>
<keyword id="KW-0808">Transferase</keyword>
<reference key="1">
    <citation type="journal article" date="2000" name="Nature">
        <title>Complete genome sequence of Pseudomonas aeruginosa PAO1, an opportunistic pathogen.</title>
        <authorList>
            <person name="Stover C.K."/>
            <person name="Pham X.-Q.T."/>
            <person name="Erwin A.L."/>
            <person name="Mizoguchi S.D."/>
            <person name="Warrener P."/>
            <person name="Hickey M.J."/>
            <person name="Brinkman F.S.L."/>
            <person name="Hufnagle W.O."/>
            <person name="Kowalik D.J."/>
            <person name="Lagrou M."/>
            <person name="Garber R.L."/>
            <person name="Goltry L."/>
            <person name="Tolentino E."/>
            <person name="Westbrock-Wadman S."/>
            <person name="Yuan Y."/>
            <person name="Brody L.L."/>
            <person name="Coulter S.N."/>
            <person name="Folger K.R."/>
            <person name="Kas A."/>
            <person name="Larbig K."/>
            <person name="Lim R.M."/>
            <person name="Smith K.A."/>
            <person name="Spencer D.H."/>
            <person name="Wong G.K.-S."/>
            <person name="Wu Z."/>
            <person name="Paulsen I.T."/>
            <person name="Reizer J."/>
            <person name="Saier M.H. Jr."/>
            <person name="Hancock R.E.W."/>
            <person name="Lory S."/>
            <person name="Olson M.V."/>
        </authorList>
    </citation>
    <scope>NUCLEOTIDE SEQUENCE [LARGE SCALE GENOMIC DNA]</scope>
    <source>
        <strain>ATCC 15692 / DSM 22644 / CIP 104116 / JCM 14847 / LMG 12228 / 1C / PRS 101 / PAO1</strain>
    </source>
</reference>
<gene>
    <name type="primary">csd</name>
    <name type="ordered locus">PA3667</name>
</gene>
<dbReference type="EC" id="2.8.1.7"/>
<dbReference type="EMBL" id="AE004091">
    <property type="protein sequence ID" value="AAG07055.1"/>
    <property type="molecule type" value="Genomic_DNA"/>
</dbReference>
<dbReference type="PIR" id="F83187">
    <property type="entry name" value="F83187"/>
</dbReference>
<dbReference type="RefSeq" id="NP_252357.1">
    <property type="nucleotide sequence ID" value="NC_002516.2"/>
</dbReference>
<dbReference type="RefSeq" id="WP_003098634.1">
    <property type="nucleotide sequence ID" value="NZ_QZGE01000001.1"/>
</dbReference>
<dbReference type="SMR" id="Q9HXX3"/>
<dbReference type="FunCoup" id="Q9HXX3">
    <property type="interactions" value="156"/>
</dbReference>
<dbReference type="STRING" id="208964.PA3667"/>
<dbReference type="PaxDb" id="208964-PA3667"/>
<dbReference type="GeneID" id="880538"/>
<dbReference type="KEGG" id="pae:PA3667"/>
<dbReference type="PATRIC" id="fig|208964.12.peg.3836"/>
<dbReference type="PseudoCAP" id="PA3667"/>
<dbReference type="HOGENOM" id="CLU_003433_2_5_6"/>
<dbReference type="InParanoid" id="Q9HXX3"/>
<dbReference type="OrthoDB" id="9808002at2"/>
<dbReference type="PhylomeDB" id="Q9HXX3"/>
<dbReference type="BioCyc" id="PAER208964:G1FZ6-3737-MONOMER"/>
<dbReference type="Proteomes" id="UP000002438">
    <property type="component" value="Chromosome"/>
</dbReference>
<dbReference type="GO" id="GO:0031071">
    <property type="term" value="F:cysteine desulfurase activity"/>
    <property type="evidence" value="ECO:0007669"/>
    <property type="project" value="UniProtKB-EC"/>
</dbReference>
<dbReference type="GO" id="GO:0030170">
    <property type="term" value="F:pyridoxal phosphate binding"/>
    <property type="evidence" value="ECO:0007669"/>
    <property type="project" value="InterPro"/>
</dbReference>
<dbReference type="GO" id="GO:0006534">
    <property type="term" value="P:cysteine metabolic process"/>
    <property type="evidence" value="ECO:0007669"/>
    <property type="project" value="InterPro"/>
</dbReference>
<dbReference type="CDD" id="cd06453">
    <property type="entry name" value="SufS_like"/>
    <property type="match status" value="1"/>
</dbReference>
<dbReference type="Gene3D" id="3.90.1150.10">
    <property type="entry name" value="Aspartate Aminotransferase, domain 1"/>
    <property type="match status" value="1"/>
</dbReference>
<dbReference type="Gene3D" id="3.40.640.10">
    <property type="entry name" value="Type I PLP-dependent aspartate aminotransferase-like (Major domain)"/>
    <property type="match status" value="1"/>
</dbReference>
<dbReference type="InterPro" id="IPR000192">
    <property type="entry name" value="Aminotrans_V_dom"/>
</dbReference>
<dbReference type="InterPro" id="IPR020578">
    <property type="entry name" value="Aminotrans_V_PyrdxlP_BS"/>
</dbReference>
<dbReference type="InterPro" id="IPR010970">
    <property type="entry name" value="Cys_dSase_SufS"/>
</dbReference>
<dbReference type="InterPro" id="IPR015424">
    <property type="entry name" value="PyrdxlP-dep_Trfase"/>
</dbReference>
<dbReference type="InterPro" id="IPR015421">
    <property type="entry name" value="PyrdxlP-dep_Trfase_major"/>
</dbReference>
<dbReference type="InterPro" id="IPR015422">
    <property type="entry name" value="PyrdxlP-dep_Trfase_small"/>
</dbReference>
<dbReference type="PANTHER" id="PTHR43586">
    <property type="entry name" value="CYSTEINE DESULFURASE"/>
    <property type="match status" value="1"/>
</dbReference>
<dbReference type="PANTHER" id="PTHR43586:SF8">
    <property type="entry name" value="CYSTEINE DESULFURASE 1, CHLOROPLASTIC"/>
    <property type="match status" value="1"/>
</dbReference>
<dbReference type="Pfam" id="PF00266">
    <property type="entry name" value="Aminotran_5"/>
    <property type="match status" value="1"/>
</dbReference>
<dbReference type="SUPFAM" id="SSF53383">
    <property type="entry name" value="PLP-dependent transferases"/>
    <property type="match status" value="1"/>
</dbReference>
<dbReference type="PROSITE" id="PS00595">
    <property type="entry name" value="AA_TRANSFER_CLASS_5"/>
    <property type="match status" value="1"/>
</dbReference>
<accession>Q9HXX3</accession>
<proteinExistence type="inferred from homology"/>
<name>CSD_PSEAE</name>
<comment type="function">
    <text evidence="1">Catalyzes the removal of elemental sulfur and selenium atoms from L-cysteine, L-cystine, L-selenocysteine, and L-selenocystine to produce L-alanine.</text>
</comment>
<comment type="catalytic activity">
    <reaction>
        <text>(sulfur carrier)-H + L-cysteine = (sulfur carrier)-SH + L-alanine</text>
        <dbReference type="Rhea" id="RHEA:43892"/>
        <dbReference type="Rhea" id="RHEA-COMP:14737"/>
        <dbReference type="Rhea" id="RHEA-COMP:14739"/>
        <dbReference type="ChEBI" id="CHEBI:29917"/>
        <dbReference type="ChEBI" id="CHEBI:35235"/>
        <dbReference type="ChEBI" id="CHEBI:57972"/>
        <dbReference type="ChEBI" id="CHEBI:64428"/>
        <dbReference type="EC" id="2.8.1.7"/>
    </reaction>
</comment>
<comment type="cofactor">
    <cofactor evidence="1">
        <name>pyridoxal 5'-phosphate</name>
        <dbReference type="ChEBI" id="CHEBI:597326"/>
    </cofactor>
</comment>
<comment type="similarity">
    <text evidence="2">Belongs to the class-V pyridoxal-phosphate-dependent aminotransferase family. Csd subfamily.</text>
</comment>